<evidence type="ECO:0000255" key="1">
    <source>
        <dbReference type="HAMAP-Rule" id="MF_00508"/>
    </source>
</evidence>
<evidence type="ECO:0000305" key="2"/>
<feature type="chain" id="PRO_1000014983" description="Small ribosomal subunit protein uS10">
    <location>
        <begin position="1"/>
        <end position="102"/>
    </location>
</feature>
<organism>
    <name type="scientific">Paenarthrobacter aurescens (strain TC1)</name>
    <dbReference type="NCBI Taxonomy" id="290340"/>
    <lineage>
        <taxon>Bacteria</taxon>
        <taxon>Bacillati</taxon>
        <taxon>Actinomycetota</taxon>
        <taxon>Actinomycetes</taxon>
        <taxon>Micrococcales</taxon>
        <taxon>Micrococcaceae</taxon>
        <taxon>Paenarthrobacter</taxon>
    </lineage>
</organism>
<gene>
    <name evidence="1" type="primary">rpsJ</name>
    <name type="ordered locus">AAur_2949</name>
</gene>
<reference key="1">
    <citation type="journal article" date="2006" name="PLoS Genet.">
        <title>Secrets of soil survival revealed by the genome sequence of Arthrobacter aurescens TC1.</title>
        <authorList>
            <person name="Mongodin E.F."/>
            <person name="Shapir N."/>
            <person name="Daugherty S.C."/>
            <person name="DeBoy R.T."/>
            <person name="Emerson J.B."/>
            <person name="Shvartzbeyn A."/>
            <person name="Radune D."/>
            <person name="Vamathevan J."/>
            <person name="Riggs F."/>
            <person name="Grinberg V."/>
            <person name="Khouri H.M."/>
            <person name="Wackett L.P."/>
            <person name="Nelson K.E."/>
            <person name="Sadowsky M.J."/>
        </authorList>
    </citation>
    <scope>NUCLEOTIDE SEQUENCE [LARGE SCALE GENOMIC DNA]</scope>
    <source>
        <strain>TC1</strain>
    </source>
</reference>
<keyword id="KW-0687">Ribonucleoprotein</keyword>
<keyword id="KW-0689">Ribosomal protein</keyword>
<proteinExistence type="inferred from homology"/>
<dbReference type="EMBL" id="CP000474">
    <property type="protein sequence ID" value="ABM07395.1"/>
    <property type="molecule type" value="Genomic_DNA"/>
</dbReference>
<dbReference type="RefSeq" id="WP_003803825.1">
    <property type="nucleotide sequence ID" value="NC_008711.1"/>
</dbReference>
<dbReference type="SMR" id="A1R8U6"/>
<dbReference type="STRING" id="290340.AAur_2949"/>
<dbReference type="GeneID" id="97421003"/>
<dbReference type="KEGG" id="aau:AAur_2949"/>
<dbReference type="eggNOG" id="COG0051">
    <property type="taxonomic scope" value="Bacteria"/>
</dbReference>
<dbReference type="HOGENOM" id="CLU_122625_1_3_11"/>
<dbReference type="OrthoDB" id="9804464at2"/>
<dbReference type="Proteomes" id="UP000000637">
    <property type="component" value="Chromosome"/>
</dbReference>
<dbReference type="GO" id="GO:1990904">
    <property type="term" value="C:ribonucleoprotein complex"/>
    <property type="evidence" value="ECO:0007669"/>
    <property type="project" value="UniProtKB-KW"/>
</dbReference>
<dbReference type="GO" id="GO:0005840">
    <property type="term" value="C:ribosome"/>
    <property type="evidence" value="ECO:0007669"/>
    <property type="project" value="UniProtKB-KW"/>
</dbReference>
<dbReference type="GO" id="GO:0003735">
    <property type="term" value="F:structural constituent of ribosome"/>
    <property type="evidence" value="ECO:0007669"/>
    <property type="project" value="InterPro"/>
</dbReference>
<dbReference type="GO" id="GO:0000049">
    <property type="term" value="F:tRNA binding"/>
    <property type="evidence" value="ECO:0007669"/>
    <property type="project" value="UniProtKB-UniRule"/>
</dbReference>
<dbReference type="GO" id="GO:0006412">
    <property type="term" value="P:translation"/>
    <property type="evidence" value="ECO:0007669"/>
    <property type="project" value="UniProtKB-UniRule"/>
</dbReference>
<dbReference type="FunFam" id="3.30.70.600:FF:000001">
    <property type="entry name" value="30S ribosomal protein S10"/>
    <property type="match status" value="1"/>
</dbReference>
<dbReference type="Gene3D" id="3.30.70.600">
    <property type="entry name" value="Ribosomal protein S10 domain"/>
    <property type="match status" value="1"/>
</dbReference>
<dbReference type="HAMAP" id="MF_00508">
    <property type="entry name" value="Ribosomal_uS10"/>
    <property type="match status" value="1"/>
</dbReference>
<dbReference type="InterPro" id="IPR001848">
    <property type="entry name" value="Ribosomal_uS10"/>
</dbReference>
<dbReference type="InterPro" id="IPR018268">
    <property type="entry name" value="Ribosomal_uS10_CS"/>
</dbReference>
<dbReference type="InterPro" id="IPR027486">
    <property type="entry name" value="Ribosomal_uS10_dom"/>
</dbReference>
<dbReference type="InterPro" id="IPR036838">
    <property type="entry name" value="Ribosomal_uS10_dom_sf"/>
</dbReference>
<dbReference type="NCBIfam" id="NF001861">
    <property type="entry name" value="PRK00596.1"/>
    <property type="match status" value="1"/>
</dbReference>
<dbReference type="NCBIfam" id="TIGR01049">
    <property type="entry name" value="rpsJ_bact"/>
    <property type="match status" value="1"/>
</dbReference>
<dbReference type="PANTHER" id="PTHR11700">
    <property type="entry name" value="30S RIBOSOMAL PROTEIN S10 FAMILY MEMBER"/>
    <property type="match status" value="1"/>
</dbReference>
<dbReference type="Pfam" id="PF00338">
    <property type="entry name" value="Ribosomal_S10"/>
    <property type="match status" value="1"/>
</dbReference>
<dbReference type="PRINTS" id="PR00971">
    <property type="entry name" value="RIBOSOMALS10"/>
</dbReference>
<dbReference type="SMART" id="SM01403">
    <property type="entry name" value="Ribosomal_S10"/>
    <property type="match status" value="1"/>
</dbReference>
<dbReference type="SUPFAM" id="SSF54999">
    <property type="entry name" value="Ribosomal protein S10"/>
    <property type="match status" value="1"/>
</dbReference>
<dbReference type="PROSITE" id="PS00361">
    <property type="entry name" value="RIBOSOMAL_S10"/>
    <property type="match status" value="1"/>
</dbReference>
<sequence>MAGQKIRIRLKSYDHEVIDVSARKIVETVTRAGATVVGPVPLPTEKNVYCVIRSPHKYKDSREHFEMRTHKRLIDIIDPTPKAVDSLMRLDLPADVNIEIKL</sequence>
<comment type="function">
    <text evidence="1">Involved in the binding of tRNA to the ribosomes.</text>
</comment>
<comment type="subunit">
    <text evidence="1">Part of the 30S ribosomal subunit.</text>
</comment>
<comment type="similarity">
    <text evidence="1">Belongs to the universal ribosomal protein uS10 family.</text>
</comment>
<protein>
    <recommendedName>
        <fullName evidence="1">Small ribosomal subunit protein uS10</fullName>
    </recommendedName>
    <alternativeName>
        <fullName evidence="2">30S ribosomal protein S10</fullName>
    </alternativeName>
</protein>
<name>RS10_PAEAT</name>
<accession>A1R8U6</accession>